<name>RS10_CALS8</name>
<proteinExistence type="inferred from homology"/>
<gene>
    <name evidence="1" type="primary">rpsJ</name>
    <name type="ordered locus">Csac_2288</name>
</gene>
<sequence>MSKAQRMRIKLKSFDYKLLDQSARKIVETAKSTGAEVSGPVPLPTDREVITIIRAPHKYKDSREQFEIKTHKRLIDIIKPTQKTVDALMRVELPAGVDIEIKLKEV</sequence>
<evidence type="ECO:0000255" key="1">
    <source>
        <dbReference type="HAMAP-Rule" id="MF_00508"/>
    </source>
</evidence>
<evidence type="ECO:0000305" key="2"/>
<keyword id="KW-0687">Ribonucleoprotein</keyword>
<keyword id="KW-0689">Ribosomal protein</keyword>
<comment type="function">
    <text evidence="1">Involved in the binding of tRNA to the ribosomes.</text>
</comment>
<comment type="subunit">
    <text evidence="1">Part of the 30S ribosomal subunit.</text>
</comment>
<comment type="similarity">
    <text evidence="1">Belongs to the universal ribosomal protein uS10 family.</text>
</comment>
<reference key="1">
    <citation type="submission" date="2007-04" db="EMBL/GenBank/DDBJ databases">
        <title>Genome sequence of the thermophilic hydrogen-producing bacterium Caldicellulosiruptor saccharolyticus DSM 8903.</title>
        <authorList>
            <person name="Copeland A."/>
            <person name="Lucas S."/>
            <person name="Lapidus A."/>
            <person name="Barry K."/>
            <person name="Detter J.C."/>
            <person name="Glavina del Rio T."/>
            <person name="Hammon N."/>
            <person name="Israni S."/>
            <person name="Dalin E."/>
            <person name="Tice H."/>
            <person name="Pitluck S."/>
            <person name="Kiss H."/>
            <person name="Brettin T."/>
            <person name="Bruce D."/>
            <person name="Han C."/>
            <person name="Schmutz J."/>
            <person name="Larimer F."/>
            <person name="Land M."/>
            <person name="Hauser L."/>
            <person name="Kyrpides N."/>
            <person name="Lykidis A."/>
            <person name="van de Werken H.J.G."/>
            <person name="Verhaart M.R.A."/>
            <person name="VanFossen A.L."/>
            <person name="Lewis D.L."/>
            <person name="Nichols J.D."/>
            <person name="Goorissen H.P."/>
            <person name="van Niel E.W.J."/>
            <person name="Stams F.J.M."/>
            <person name="Willquist K.U."/>
            <person name="Ward D.E."/>
            <person name="van der Oost J."/>
            <person name="Kelly R.M."/>
            <person name="Kengen S.M.W."/>
            <person name="Richardson P."/>
        </authorList>
    </citation>
    <scope>NUCLEOTIDE SEQUENCE [LARGE SCALE GENOMIC DNA]</scope>
    <source>
        <strain>ATCC 43494 / DSM 8903 / Tp8T 6331</strain>
    </source>
</reference>
<protein>
    <recommendedName>
        <fullName evidence="1">Small ribosomal subunit protein uS10</fullName>
    </recommendedName>
    <alternativeName>
        <fullName evidence="2">30S ribosomal protein S10</fullName>
    </alternativeName>
</protein>
<organism>
    <name type="scientific">Caldicellulosiruptor saccharolyticus (strain ATCC 43494 / DSM 8903 / Tp8T 6331)</name>
    <dbReference type="NCBI Taxonomy" id="351627"/>
    <lineage>
        <taxon>Bacteria</taxon>
        <taxon>Bacillati</taxon>
        <taxon>Bacillota</taxon>
        <taxon>Bacillota incertae sedis</taxon>
        <taxon>Caldicellulosiruptorales</taxon>
        <taxon>Caldicellulosiruptoraceae</taxon>
        <taxon>Caldicellulosiruptor</taxon>
    </lineage>
</organism>
<accession>A4XLT1</accession>
<feature type="chain" id="PRO_1000015003" description="Small ribosomal subunit protein uS10">
    <location>
        <begin position="1"/>
        <end position="106"/>
    </location>
</feature>
<dbReference type="EMBL" id="CP000679">
    <property type="protein sequence ID" value="ABP67866.1"/>
    <property type="molecule type" value="Genomic_DNA"/>
</dbReference>
<dbReference type="RefSeq" id="WP_011917792.1">
    <property type="nucleotide sequence ID" value="NC_009437.1"/>
</dbReference>
<dbReference type="SMR" id="A4XLT1"/>
<dbReference type="STRING" id="351627.Csac_2288"/>
<dbReference type="KEGG" id="csc:Csac_2288"/>
<dbReference type="eggNOG" id="COG0051">
    <property type="taxonomic scope" value="Bacteria"/>
</dbReference>
<dbReference type="HOGENOM" id="CLU_122625_1_3_9"/>
<dbReference type="OrthoDB" id="9804464at2"/>
<dbReference type="Proteomes" id="UP000000256">
    <property type="component" value="Chromosome"/>
</dbReference>
<dbReference type="GO" id="GO:1990904">
    <property type="term" value="C:ribonucleoprotein complex"/>
    <property type="evidence" value="ECO:0007669"/>
    <property type="project" value="UniProtKB-KW"/>
</dbReference>
<dbReference type="GO" id="GO:0005840">
    <property type="term" value="C:ribosome"/>
    <property type="evidence" value="ECO:0007669"/>
    <property type="project" value="UniProtKB-KW"/>
</dbReference>
<dbReference type="GO" id="GO:0003735">
    <property type="term" value="F:structural constituent of ribosome"/>
    <property type="evidence" value="ECO:0007669"/>
    <property type="project" value="InterPro"/>
</dbReference>
<dbReference type="GO" id="GO:0000049">
    <property type="term" value="F:tRNA binding"/>
    <property type="evidence" value="ECO:0007669"/>
    <property type="project" value="UniProtKB-UniRule"/>
</dbReference>
<dbReference type="GO" id="GO:0006412">
    <property type="term" value="P:translation"/>
    <property type="evidence" value="ECO:0007669"/>
    <property type="project" value="UniProtKB-UniRule"/>
</dbReference>
<dbReference type="FunFam" id="3.30.70.600:FF:000001">
    <property type="entry name" value="30S ribosomal protein S10"/>
    <property type="match status" value="1"/>
</dbReference>
<dbReference type="Gene3D" id="3.30.70.600">
    <property type="entry name" value="Ribosomal protein S10 domain"/>
    <property type="match status" value="1"/>
</dbReference>
<dbReference type="HAMAP" id="MF_00508">
    <property type="entry name" value="Ribosomal_uS10"/>
    <property type="match status" value="1"/>
</dbReference>
<dbReference type="InterPro" id="IPR001848">
    <property type="entry name" value="Ribosomal_uS10"/>
</dbReference>
<dbReference type="InterPro" id="IPR018268">
    <property type="entry name" value="Ribosomal_uS10_CS"/>
</dbReference>
<dbReference type="InterPro" id="IPR027486">
    <property type="entry name" value="Ribosomal_uS10_dom"/>
</dbReference>
<dbReference type="InterPro" id="IPR036838">
    <property type="entry name" value="Ribosomal_uS10_dom_sf"/>
</dbReference>
<dbReference type="NCBIfam" id="NF001861">
    <property type="entry name" value="PRK00596.1"/>
    <property type="match status" value="1"/>
</dbReference>
<dbReference type="NCBIfam" id="TIGR01049">
    <property type="entry name" value="rpsJ_bact"/>
    <property type="match status" value="1"/>
</dbReference>
<dbReference type="PANTHER" id="PTHR11700">
    <property type="entry name" value="30S RIBOSOMAL PROTEIN S10 FAMILY MEMBER"/>
    <property type="match status" value="1"/>
</dbReference>
<dbReference type="Pfam" id="PF00338">
    <property type="entry name" value="Ribosomal_S10"/>
    <property type="match status" value="1"/>
</dbReference>
<dbReference type="PRINTS" id="PR00971">
    <property type="entry name" value="RIBOSOMALS10"/>
</dbReference>
<dbReference type="SMART" id="SM01403">
    <property type="entry name" value="Ribosomal_S10"/>
    <property type="match status" value="1"/>
</dbReference>
<dbReference type="SUPFAM" id="SSF54999">
    <property type="entry name" value="Ribosomal protein S10"/>
    <property type="match status" value="1"/>
</dbReference>
<dbReference type="PROSITE" id="PS00361">
    <property type="entry name" value="RIBOSOMAL_S10"/>
    <property type="match status" value="1"/>
</dbReference>